<reference key="1">
    <citation type="journal article" date="2008" name="BMC Genomics">
        <title>Acidithiobacillus ferrooxidans metabolism: from genome sequence to industrial applications.</title>
        <authorList>
            <person name="Valdes J."/>
            <person name="Pedroso I."/>
            <person name="Quatrini R."/>
            <person name="Dodson R.J."/>
            <person name="Tettelin H."/>
            <person name="Blake R. II"/>
            <person name="Eisen J.A."/>
            <person name="Holmes D.S."/>
        </authorList>
    </citation>
    <scope>NUCLEOTIDE SEQUENCE [LARGE SCALE GENOMIC DNA]</scope>
    <source>
        <strain>ATCC 23270 / DSM 14882 / CIP 104768 / NCIMB 8455</strain>
    </source>
</reference>
<keyword id="KW-0963">Cytoplasm</keyword>
<keyword id="KW-0251">Elongation factor</keyword>
<keyword id="KW-0648">Protein biosynthesis</keyword>
<keyword id="KW-1185">Reference proteome</keyword>
<gene>
    <name evidence="1" type="primary">tsf</name>
    <name type="ordered locus">AFE_1445</name>
</gene>
<feature type="chain" id="PRO_1000116680" description="Elongation factor Ts">
    <location>
        <begin position="1"/>
        <end position="292"/>
    </location>
</feature>
<feature type="region of interest" description="Involved in Mg(2+) ion dislocation from EF-Tu" evidence="1">
    <location>
        <begin position="81"/>
        <end position="84"/>
    </location>
</feature>
<comment type="function">
    <text evidence="1">Associates with the EF-Tu.GDP complex and induces the exchange of GDP to GTP. It remains bound to the aminoacyl-tRNA.EF-Tu.GTP complex up to the GTP hydrolysis stage on the ribosome.</text>
</comment>
<comment type="subcellular location">
    <subcellularLocation>
        <location evidence="1">Cytoplasm</location>
    </subcellularLocation>
</comment>
<comment type="similarity">
    <text evidence="1">Belongs to the EF-Ts family.</text>
</comment>
<accession>B7J9P2</accession>
<proteinExistence type="inferred from homology"/>
<dbReference type="EMBL" id="CP001219">
    <property type="protein sequence ID" value="ACK78038.1"/>
    <property type="molecule type" value="Genomic_DNA"/>
</dbReference>
<dbReference type="RefSeq" id="WP_012536522.1">
    <property type="nucleotide sequence ID" value="NC_011761.1"/>
</dbReference>
<dbReference type="SMR" id="B7J9P2"/>
<dbReference type="STRING" id="243159.AFE_1445"/>
<dbReference type="PaxDb" id="243159-AFE_1445"/>
<dbReference type="GeneID" id="65280666"/>
<dbReference type="KEGG" id="afr:AFE_1445"/>
<dbReference type="eggNOG" id="COG0264">
    <property type="taxonomic scope" value="Bacteria"/>
</dbReference>
<dbReference type="HOGENOM" id="CLU_047155_0_2_6"/>
<dbReference type="Proteomes" id="UP000001362">
    <property type="component" value="Chromosome"/>
</dbReference>
<dbReference type="GO" id="GO:0005737">
    <property type="term" value="C:cytoplasm"/>
    <property type="evidence" value="ECO:0007669"/>
    <property type="project" value="UniProtKB-SubCell"/>
</dbReference>
<dbReference type="GO" id="GO:0003746">
    <property type="term" value="F:translation elongation factor activity"/>
    <property type="evidence" value="ECO:0007669"/>
    <property type="project" value="UniProtKB-UniRule"/>
</dbReference>
<dbReference type="CDD" id="cd14275">
    <property type="entry name" value="UBA_EF-Ts"/>
    <property type="match status" value="1"/>
</dbReference>
<dbReference type="FunFam" id="1.10.286.20:FF:000001">
    <property type="entry name" value="Elongation factor Ts"/>
    <property type="match status" value="1"/>
</dbReference>
<dbReference type="FunFam" id="1.10.8.10:FF:000001">
    <property type="entry name" value="Elongation factor Ts"/>
    <property type="match status" value="1"/>
</dbReference>
<dbReference type="Gene3D" id="1.10.286.20">
    <property type="match status" value="1"/>
</dbReference>
<dbReference type="Gene3D" id="1.10.8.10">
    <property type="entry name" value="DNA helicase RuvA subunit, C-terminal domain"/>
    <property type="match status" value="1"/>
</dbReference>
<dbReference type="Gene3D" id="3.30.479.20">
    <property type="entry name" value="Elongation factor Ts, dimerisation domain"/>
    <property type="match status" value="2"/>
</dbReference>
<dbReference type="HAMAP" id="MF_00050">
    <property type="entry name" value="EF_Ts"/>
    <property type="match status" value="1"/>
</dbReference>
<dbReference type="InterPro" id="IPR036402">
    <property type="entry name" value="EF-Ts_dimer_sf"/>
</dbReference>
<dbReference type="InterPro" id="IPR001816">
    <property type="entry name" value="Transl_elong_EFTs/EF1B"/>
</dbReference>
<dbReference type="InterPro" id="IPR014039">
    <property type="entry name" value="Transl_elong_EFTs/EF1B_dimer"/>
</dbReference>
<dbReference type="InterPro" id="IPR018101">
    <property type="entry name" value="Transl_elong_Ts_CS"/>
</dbReference>
<dbReference type="InterPro" id="IPR009060">
    <property type="entry name" value="UBA-like_sf"/>
</dbReference>
<dbReference type="NCBIfam" id="TIGR00116">
    <property type="entry name" value="tsf"/>
    <property type="match status" value="1"/>
</dbReference>
<dbReference type="PANTHER" id="PTHR11741">
    <property type="entry name" value="ELONGATION FACTOR TS"/>
    <property type="match status" value="1"/>
</dbReference>
<dbReference type="PANTHER" id="PTHR11741:SF0">
    <property type="entry name" value="ELONGATION FACTOR TS, MITOCHONDRIAL"/>
    <property type="match status" value="1"/>
</dbReference>
<dbReference type="Pfam" id="PF00889">
    <property type="entry name" value="EF_TS"/>
    <property type="match status" value="1"/>
</dbReference>
<dbReference type="SUPFAM" id="SSF54713">
    <property type="entry name" value="Elongation factor Ts (EF-Ts), dimerisation domain"/>
    <property type="match status" value="2"/>
</dbReference>
<dbReference type="SUPFAM" id="SSF46934">
    <property type="entry name" value="UBA-like"/>
    <property type="match status" value="1"/>
</dbReference>
<dbReference type="PROSITE" id="PS01127">
    <property type="entry name" value="EF_TS_2"/>
    <property type="match status" value="1"/>
</dbReference>
<evidence type="ECO:0000255" key="1">
    <source>
        <dbReference type="HAMAP-Rule" id="MF_00050"/>
    </source>
</evidence>
<organism>
    <name type="scientific">Acidithiobacillus ferrooxidans (strain ATCC 23270 / DSM 14882 / CIP 104768 / NCIMB 8455)</name>
    <name type="common">Ferrobacillus ferrooxidans (strain ATCC 23270)</name>
    <dbReference type="NCBI Taxonomy" id="243159"/>
    <lineage>
        <taxon>Bacteria</taxon>
        <taxon>Pseudomonadati</taxon>
        <taxon>Pseudomonadota</taxon>
        <taxon>Acidithiobacillia</taxon>
        <taxon>Acidithiobacillales</taxon>
        <taxon>Acidithiobacillaceae</taxon>
        <taxon>Acidithiobacillus</taxon>
    </lineage>
</organism>
<name>EFTS_ACIF2</name>
<sequence>MAISAQQVKELRERSGAGMMECKTVLTEAEGDMEAAIDLLRARGLAKADKKASRVAAEGVIVTALSEDQKRGVVLEVNCETDFVAKNEDFLALAKDCAGQALAQGLKDAEALLADAGVEERRKGLVSKLGENISLRRLQHLQVMDGVIGAYVHGSRIGVLVALEGQAATSELGRDVAMHVAAARPEVIHPGEVSPERLNREKEILITQAADSGKPADIIEKMISGRLNKLLNEIALTGQPFVKDPDRSVGQLIQSFPGVEVLEFVRFEVGEGIEKAPTADFATEVMAQVRGS</sequence>
<protein>
    <recommendedName>
        <fullName evidence="1">Elongation factor Ts</fullName>
        <shortName evidence="1">EF-Ts</shortName>
    </recommendedName>
</protein>